<organism>
    <name type="scientific">Acholeplasma laidlawii (strain PG-8A)</name>
    <dbReference type="NCBI Taxonomy" id="441768"/>
    <lineage>
        <taxon>Bacteria</taxon>
        <taxon>Bacillati</taxon>
        <taxon>Mycoplasmatota</taxon>
        <taxon>Mollicutes</taxon>
        <taxon>Acholeplasmatales</taxon>
        <taxon>Acholeplasmataceae</taxon>
        <taxon>Acholeplasma</taxon>
    </lineage>
</organism>
<protein>
    <recommendedName>
        <fullName evidence="1">Threonine--tRNA ligase</fullName>
        <ecNumber evidence="1">6.1.1.3</ecNumber>
    </recommendedName>
    <alternativeName>
        <fullName evidence="1">Threonyl-tRNA synthetase</fullName>
        <shortName evidence="1">ThrRS</shortName>
    </alternativeName>
</protein>
<accession>A9NF46</accession>
<proteinExistence type="inferred from homology"/>
<evidence type="ECO:0000255" key="1">
    <source>
        <dbReference type="HAMAP-Rule" id="MF_00184"/>
    </source>
</evidence>
<evidence type="ECO:0000255" key="2">
    <source>
        <dbReference type="PROSITE-ProRule" id="PRU01228"/>
    </source>
</evidence>
<comment type="function">
    <text evidence="1">Catalyzes the attachment of threonine to tRNA(Thr) in a two-step reaction: L-threonine is first activated by ATP to form Thr-AMP and then transferred to the acceptor end of tRNA(Thr). Also edits incorrectly charged L-seryl-tRNA(Thr).</text>
</comment>
<comment type="catalytic activity">
    <reaction evidence="1">
        <text>tRNA(Thr) + L-threonine + ATP = L-threonyl-tRNA(Thr) + AMP + diphosphate + H(+)</text>
        <dbReference type="Rhea" id="RHEA:24624"/>
        <dbReference type="Rhea" id="RHEA-COMP:9670"/>
        <dbReference type="Rhea" id="RHEA-COMP:9704"/>
        <dbReference type="ChEBI" id="CHEBI:15378"/>
        <dbReference type="ChEBI" id="CHEBI:30616"/>
        <dbReference type="ChEBI" id="CHEBI:33019"/>
        <dbReference type="ChEBI" id="CHEBI:57926"/>
        <dbReference type="ChEBI" id="CHEBI:78442"/>
        <dbReference type="ChEBI" id="CHEBI:78534"/>
        <dbReference type="ChEBI" id="CHEBI:456215"/>
        <dbReference type="EC" id="6.1.1.3"/>
    </reaction>
</comment>
<comment type="cofactor">
    <cofactor evidence="1">
        <name>Zn(2+)</name>
        <dbReference type="ChEBI" id="CHEBI:29105"/>
    </cofactor>
    <text evidence="1">Binds 1 zinc ion per subunit.</text>
</comment>
<comment type="subunit">
    <text evidence="1">Homodimer.</text>
</comment>
<comment type="subcellular location">
    <subcellularLocation>
        <location evidence="1">Cytoplasm</location>
    </subcellularLocation>
</comment>
<comment type="similarity">
    <text evidence="1">Belongs to the class-II aminoacyl-tRNA synthetase family.</text>
</comment>
<feature type="chain" id="PRO_1000077346" description="Threonine--tRNA ligase">
    <location>
        <begin position="1"/>
        <end position="642"/>
    </location>
</feature>
<feature type="domain" description="TGS" evidence="2">
    <location>
        <begin position="1"/>
        <end position="61"/>
    </location>
</feature>
<feature type="region of interest" description="Catalytic" evidence="1">
    <location>
        <begin position="240"/>
        <end position="539"/>
    </location>
</feature>
<feature type="binding site" evidence="1">
    <location>
        <position position="334"/>
    </location>
    <ligand>
        <name>Zn(2+)</name>
        <dbReference type="ChEBI" id="CHEBI:29105"/>
    </ligand>
</feature>
<feature type="binding site" evidence="1">
    <location>
        <position position="385"/>
    </location>
    <ligand>
        <name>Zn(2+)</name>
        <dbReference type="ChEBI" id="CHEBI:29105"/>
    </ligand>
</feature>
<feature type="binding site" evidence="1">
    <location>
        <position position="516"/>
    </location>
    <ligand>
        <name>Zn(2+)</name>
        <dbReference type="ChEBI" id="CHEBI:29105"/>
    </ligand>
</feature>
<reference key="1">
    <citation type="journal article" date="2011" name="J. Bacteriol.">
        <title>Complete genome and proteome of Acholeplasma laidlawii.</title>
        <authorList>
            <person name="Lazarev V.N."/>
            <person name="Levitskii S.A."/>
            <person name="Basovskii Y.I."/>
            <person name="Chukin M.M."/>
            <person name="Akopian T.A."/>
            <person name="Vereshchagin V.V."/>
            <person name="Kostrjukova E.S."/>
            <person name="Kovaleva G.Y."/>
            <person name="Kazanov M.D."/>
            <person name="Malko D.B."/>
            <person name="Vitreschak A.G."/>
            <person name="Sernova N.V."/>
            <person name="Gelfand M.S."/>
            <person name="Demina I.A."/>
            <person name="Serebryakova M.V."/>
            <person name="Galyamina M.A."/>
            <person name="Vtyurin N.N."/>
            <person name="Rogov S.I."/>
            <person name="Alexeev D.G."/>
            <person name="Ladygina V.G."/>
            <person name="Govorun V.M."/>
        </authorList>
    </citation>
    <scope>NUCLEOTIDE SEQUENCE [LARGE SCALE GENOMIC DNA]</scope>
    <source>
        <strain>PG-8A</strain>
    </source>
</reference>
<gene>
    <name evidence="1" type="primary">thrS</name>
    <name type="ordered locus">ACL_0354</name>
</gene>
<keyword id="KW-0030">Aminoacyl-tRNA synthetase</keyword>
<keyword id="KW-0067">ATP-binding</keyword>
<keyword id="KW-0963">Cytoplasm</keyword>
<keyword id="KW-0436">Ligase</keyword>
<keyword id="KW-0479">Metal-binding</keyword>
<keyword id="KW-0547">Nucleotide-binding</keyword>
<keyword id="KW-0648">Protein biosynthesis</keyword>
<keyword id="KW-1185">Reference proteome</keyword>
<keyword id="KW-0694">RNA-binding</keyword>
<keyword id="KW-0820">tRNA-binding</keyword>
<keyword id="KW-0862">Zinc</keyword>
<name>SYT_ACHLI</name>
<sequence length="642" mass="75292">MIKVTFPDGNIKSYKKGITVLEVAEDISISLAKKIVAAKFNEDLVEISRKLEHDGKLQLLTPKEELSFHVLNHSAAHLMAQAIRKLYPDALFGVGPAIEEGYYYDVDFKDSVFTDADLEEVEKMMKKLSEENHLIERIEVSYDEARDIFKNDPYKLELIEVYKDDQLSVYRQGEFIDLCRGGHVPSTKYIKHFKLLSIAGAYWRGDAKNRQLVRVYGIAYFEKAELDKHLVMLEERKLRDHRKIGKDLDIFMTSQEVGSGLPFWLPKGATIRRIIERYITDKELELGYLHVYTPIMANVEFYKQSGHWDHYHENMYPPMDLGDGEMLVLRPMNCPHHMMIYKKDIHSYRELPIRFAELGMMHRYEKSGALSGLQRVREMTLNDAHIFVRPDQIKEEFMRVVHLIIEVYKDFKITDYSFRLSYRDPENKEKYFDDDQMWQRAESELKNVMDEMKLPYKEAIGEAAFYGPKLDIQVRTAMGMEETLSTVQLDFLLPERFDLTYVGEDGKNNHRPVVIHRGVVSTMERFVAYLIEEYKGSFPLWLAPVQLKLIPVNLDLHKDYVMNLHEQLKKLGFRVESDFRNEKLGYKIREAQTLKIPYQLVVGDNEMNTHSITYRPYGSEKQINISIDGFIKLLNERMINKD</sequence>
<dbReference type="EC" id="6.1.1.3" evidence="1"/>
<dbReference type="EMBL" id="CP000896">
    <property type="protein sequence ID" value="ABX80976.1"/>
    <property type="molecule type" value="Genomic_DNA"/>
</dbReference>
<dbReference type="RefSeq" id="WP_012242307.1">
    <property type="nucleotide sequence ID" value="NC_010163.1"/>
</dbReference>
<dbReference type="SMR" id="A9NF46"/>
<dbReference type="STRING" id="441768.ACL_0354"/>
<dbReference type="GeneID" id="41338536"/>
<dbReference type="KEGG" id="acl:ACL_0354"/>
<dbReference type="eggNOG" id="COG0441">
    <property type="taxonomic scope" value="Bacteria"/>
</dbReference>
<dbReference type="HOGENOM" id="CLU_008554_3_2_14"/>
<dbReference type="OrthoDB" id="9802304at2"/>
<dbReference type="Proteomes" id="UP000008558">
    <property type="component" value="Chromosome"/>
</dbReference>
<dbReference type="GO" id="GO:0005737">
    <property type="term" value="C:cytoplasm"/>
    <property type="evidence" value="ECO:0007669"/>
    <property type="project" value="UniProtKB-SubCell"/>
</dbReference>
<dbReference type="GO" id="GO:0005524">
    <property type="term" value="F:ATP binding"/>
    <property type="evidence" value="ECO:0007669"/>
    <property type="project" value="UniProtKB-UniRule"/>
</dbReference>
<dbReference type="GO" id="GO:0046872">
    <property type="term" value="F:metal ion binding"/>
    <property type="evidence" value="ECO:0007669"/>
    <property type="project" value="UniProtKB-KW"/>
</dbReference>
<dbReference type="GO" id="GO:0004829">
    <property type="term" value="F:threonine-tRNA ligase activity"/>
    <property type="evidence" value="ECO:0007669"/>
    <property type="project" value="UniProtKB-UniRule"/>
</dbReference>
<dbReference type="GO" id="GO:0000049">
    <property type="term" value="F:tRNA binding"/>
    <property type="evidence" value="ECO:0007669"/>
    <property type="project" value="UniProtKB-KW"/>
</dbReference>
<dbReference type="GO" id="GO:0006435">
    <property type="term" value="P:threonyl-tRNA aminoacylation"/>
    <property type="evidence" value="ECO:0007669"/>
    <property type="project" value="UniProtKB-UniRule"/>
</dbReference>
<dbReference type="CDD" id="cd01667">
    <property type="entry name" value="TGS_ThrRS"/>
    <property type="match status" value="1"/>
</dbReference>
<dbReference type="CDD" id="cd00860">
    <property type="entry name" value="ThrRS_anticodon"/>
    <property type="match status" value="1"/>
</dbReference>
<dbReference type="CDD" id="cd00771">
    <property type="entry name" value="ThrRS_core"/>
    <property type="match status" value="1"/>
</dbReference>
<dbReference type="FunFam" id="3.10.20.30:FF:000005">
    <property type="entry name" value="Threonine--tRNA ligase"/>
    <property type="match status" value="1"/>
</dbReference>
<dbReference type="FunFam" id="3.30.930.10:FF:000002">
    <property type="entry name" value="Threonine--tRNA ligase"/>
    <property type="match status" value="1"/>
</dbReference>
<dbReference type="FunFam" id="3.40.50.800:FF:000001">
    <property type="entry name" value="Threonine--tRNA ligase"/>
    <property type="match status" value="1"/>
</dbReference>
<dbReference type="FunFam" id="3.30.980.10:FF:000005">
    <property type="entry name" value="Threonyl-tRNA synthetase, mitochondrial"/>
    <property type="match status" value="1"/>
</dbReference>
<dbReference type="Gene3D" id="3.10.20.30">
    <property type="match status" value="1"/>
</dbReference>
<dbReference type="Gene3D" id="3.30.54.20">
    <property type="match status" value="1"/>
</dbReference>
<dbReference type="Gene3D" id="3.40.50.800">
    <property type="entry name" value="Anticodon-binding domain"/>
    <property type="match status" value="1"/>
</dbReference>
<dbReference type="Gene3D" id="3.30.930.10">
    <property type="entry name" value="Bira Bifunctional Protein, Domain 2"/>
    <property type="match status" value="1"/>
</dbReference>
<dbReference type="Gene3D" id="3.30.980.10">
    <property type="entry name" value="Threonyl-trna Synthetase, Chain A, domain 2"/>
    <property type="match status" value="1"/>
</dbReference>
<dbReference type="HAMAP" id="MF_00184">
    <property type="entry name" value="Thr_tRNA_synth"/>
    <property type="match status" value="1"/>
</dbReference>
<dbReference type="InterPro" id="IPR002314">
    <property type="entry name" value="aa-tRNA-synt_IIb"/>
</dbReference>
<dbReference type="InterPro" id="IPR006195">
    <property type="entry name" value="aa-tRNA-synth_II"/>
</dbReference>
<dbReference type="InterPro" id="IPR045864">
    <property type="entry name" value="aa-tRNA-synth_II/BPL/LPL"/>
</dbReference>
<dbReference type="InterPro" id="IPR004154">
    <property type="entry name" value="Anticodon-bd"/>
</dbReference>
<dbReference type="InterPro" id="IPR036621">
    <property type="entry name" value="Anticodon-bd_dom_sf"/>
</dbReference>
<dbReference type="InterPro" id="IPR012675">
    <property type="entry name" value="Beta-grasp_dom_sf"/>
</dbReference>
<dbReference type="InterPro" id="IPR004095">
    <property type="entry name" value="TGS"/>
</dbReference>
<dbReference type="InterPro" id="IPR012676">
    <property type="entry name" value="TGS-like"/>
</dbReference>
<dbReference type="InterPro" id="IPR002320">
    <property type="entry name" value="Thr-tRNA-ligase_IIa"/>
</dbReference>
<dbReference type="InterPro" id="IPR018163">
    <property type="entry name" value="Thr/Ala-tRNA-synth_IIc_edit"/>
</dbReference>
<dbReference type="InterPro" id="IPR047246">
    <property type="entry name" value="ThrRS_anticodon"/>
</dbReference>
<dbReference type="InterPro" id="IPR033728">
    <property type="entry name" value="ThrRS_core"/>
</dbReference>
<dbReference type="InterPro" id="IPR012947">
    <property type="entry name" value="tRNA_SAD"/>
</dbReference>
<dbReference type="NCBIfam" id="TIGR00418">
    <property type="entry name" value="thrS"/>
    <property type="match status" value="1"/>
</dbReference>
<dbReference type="PANTHER" id="PTHR11451:SF56">
    <property type="entry name" value="THREONINE--TRNA LIGASE 1"/>
    <property type="match status" value="1"/>
</dbReference>
<dbReference type="PANTHER" id="PTHR11451">
    <property type="entry name" value="THREONINE-TRNA LIGASE"/>
    <property type="match status" value="1"/>
</dbReference>
<dbReference type="Pfam" id="PF03129">
    <property type="entry name" value="HGTP_anticodon"/>
    <property type="match status" value="1"/>
</dbReference>
<dbReference type="Pfam" id="PF02824">
    <property type="entry name" value="TGS"/>
    <property type="match status" value="1"/>
</dbReference>
<dbReference type="Pfam" id="PF00587">
    <property type="entry name" value="tRNA-synt_2b"/>
    <property type="match status" value="1"/>
</dbReference>
<dbReference type="Pfam" id="PF07973">
    <property type="entry name" value="tRNA_SAD"/>
    <property type="match status" value="1"/>
</dbReference>
<dbReference type="PRINTS" id="PR01047">
    <property type="entry name" value="TRNASYNTHTHR"/>
</dbReference>
<dbReference type="SMART" id="SM00863">
    <property type="entry name" value="tRNA_SAD"/>
    <property type="match status" value="1"/>
</dbReference>
<dbReference type="SUPFAM" id="SSF52954">
    <property type="entry name" value="Class II aaRS ABD-related"/>
    <property type="match status" value="1"/>
</dbReference>
<dbReference type="SUPFAM" id="SSF55681">
    <property type="entry name" value="Class II aaRS and biotin synthetases"/>
    <property type="match status" value="1"/>
</dbReference>
<dbReference type="SUPFAM" id="SSF81271">
    <property type="entry name" value="TGS-like"/>
    <property type="match status" value="1"/>
</dbReference>
<dbReference type="SUPFAM" id="SSF55186">
    <property type="entry name" value="ThrRS/AlaRS common domain"/>
    <property type="match status" value="1"/>
</dbReference>
<dbReference type="PROSITE" id="PS50862">
    <property type="entry name" value="AA_TRNA_LIGASE_II"/>
    <property type="match status" value="1"/>
</dbReference>
<dbReference type="PROSITE" id="PS51880">
    <property type="entry name" value="TGS"/>
    <property type="match status" value="1"/>
</dbReference>